<sequence>MTKYAKIIGTGSYLPPRRVTNHELAAQLAEKGIETSDEWIVSRSGISARHWAEPDVTSSTLAVKAAEQAIEAAGIDRQDIDLIIVATSTPDFVFPSTACIVQEKLGITNHCPAFDLQAVCSGFVYALATADKFIRSGSHRNVLVIGTEVFSRILDFNDRTTCVLFGDGAGAVVLSASDEPGILSSAMHSDGSHVDILCVPGNVAGGNITGNPFLHMDGQAVFKLAVNVLDKVAREAMEAASVSPDQVDWLIPHQANIRIMQGTAKKLGLPAERMVATVHEHGNTSAASIPLALDVAVRDGRIRPGHTVLMEGVGGGFTWGAVLLRM</sequence>
<name>FABH_CUPTR</name>
<reference key="1">
    <citation type="journal article" date="2008" name="Genome Res.">
        <title>Genome sequence of the beta-rhizobium Cupriavidus taiwanensis and comparative genomics of rhizobia.</title>
        <authorList>
            <person name="Amadou C."/>
            <person name="Pascal G."/>
            <person name="Mangenot S."/>
            <person name="Glew M."/>
            <person name="Bontemps C."/>
            <person name="Capela D."/>
            <person name="Carrere S."/>
            <person name="Cruveiller S."/>
            <person name="Dossat C."/>
            <person name="Lajus A."/>
            <person name="Marchetti M."/>
            <person name="Poinsot V."/>
            <person name="Rouy Z."/>
            <person name="Servin B."/>
            <person name="Saad M."/>
            <person name="Schenowitz C."/>
            <person name="Barbe V."/>
            <person name="Batut J."/>
            <person name="Medigue C."/>
            <person name="Masson-Boivin C."/>
        </authorList>
    </citation>
    <scope>NUCLEOTIDE SEQUENCE [LARGE SCALE GENOMIC DNA]</scope>
    <source>
        <strain>DSM 17343 / BCRC 17206 / CCUG 44338 / CIP 107171 / LMG 19424 / R1</strain>
    </source>
</reference>
<protein>
    <recommendedName>
        <fullName evidence="1">Beta-ketoacyl-[acyl-carrier-protein] synthase III</fullName>
        <shortName evidence="1">Beta-ketoacyl-ACP synthase III</shortName>
        <shortName evidence="1">KAS III</shortName>
        <ecNumber evidence="1">2.3.1.180</ecNumber>
    </recommendedName>
    <alternativeName>
        <fullName evidence="1">3-oxoacyl-[acyl-carrier-protein] synthase 3</fullName>
    </alternativeName>
    <alternativeName>
        <fullName evidence="1">3-oxoacyl-[acyl-carrier-protein] synthase III</fullName>
    </alternativeName>
</protein>
<gene>
    <name evidence="1" type="primary">fabH</name>
    <name type="ordered locus">RALTA_A2072</name>
</gene>
<keyword id="KW-0012">Acyltransferase</keyword>
<keyword id="KW-0963">Cytoplasm</keyword>
<keyword id="KW-0275">Fatty acid biosynthesis</keyword>
<keyword id="KW-0276">Fatty acid metabolism</keyword>
<keyword id="KW-0444">Lipid biosynthesis</keyword>
<keyword id="KW-0443">Lipid metabolism</keyword>
<keyword id="KW-0511">Multifunctional enzyme</keyword>
<keyword id="KW-0808">Transferase</keyword>
<organism>
    <name type="scientific">Cupriavidus taiwanensis (strain DSM 17343 / BCRC 17206 / CCUG 44338 / CIP 107171 / LMG 19424 / R1)</name>
    <name type="common">Ralstonia taiwanensis (strain LMG 19424)</name>
    <dbReference type="NCBI Taxonomy" id="977880"/>
    <lineage>
        <taxon>Bacteria</taxon>
        <taxon>Pseudomonadati</taxon>
        <taxon>Pseudomonadota</taxon>
        <taxon>Betaproteobacteria</taxon>
        <taxon>Burkholderiales</taxon>
        <taxon>Burkholderiaceae</taxon>
        <taxon>Cupriavidus</taxon>
    </lineage>
</organism>
<comment type="function">
    <text evidence="1">Catalyzes the condensation reaction of fatty acid synthesis by the addition to an acyl acceptor of two carbons from malonyl-ACP. Catalyzes the first condensation reaction which initiates fatty acid synthesis and may therefore play a role in governing the total rate of fatty acid production. Possesses both acetoacetyl-ACP synthase and acetyl transacylase activities. Its substrate specificity determines the biosynthesis of branched-chain and/or straight-chain of fatty acids.</text>
</comment>
<comment type="catalytic activity">
    <reaction evidence="1">
        <text>malonyl-[ACP] + acetyl-CoA + H(+) = 3-oxobutanoyl-[ACP] + CO2 + CoA</text>
        <dbReference type="Rhea" id="RHEA:12080"/>
        <dbReference type="Rhea" id="RHEA-COMP:9623"/>
        <dbReference type="Rhea" id="RHEA-COMP:9625"/>
        <dbReference type="ChEBI" id="CHEBI:15378"/>
        <dbReference type="ChEBI" id="CHEBI:16526"/>
        <dbReference type="ChEBI" id="CHEBI:57287"/>
        <dbReference type="ChEBI" id="CHEBI:57288"/>
        <dbReference type="ChEBI" id="CHEBI:78449"/>
        <dbReference type="ChEBI" id="CHEBI:78450"/>
        <dbReference type="EC" id="2.3.1.180"/>
    </reaction>
</comment>
<comment type="pathway">
    <text evidence="1">Lipid metabolism; fatty acid biosynthesis.</text>
</comment>
<comment type="subunit">
    <text evidence="1">Homodimer.</text>
</comment>
<comment type="subcellular location">
    <subcellularLocation>
        <location evidence="1">Cytoplasm</location>
    </subcellularLocation>
</comment>
<comment type="domain">
    <text evidence="1">The last Arg residue of the ACP-binding site is essential for the weak association between ACP/AcpP and FabH.</text>
</comment>
<comment type="similarity">
    <text evidence="1">Belongs to the thiolase-like superfamily. FabH family.</text>
</comment>
<dbReference type="EC" id="2.3.1.180" evidence="1"/>
<dbReference type="EMBL" id="CU633749">
    <property type="protein sequence ID" value="CAQ70010.1"/>
    <property type="molecule type" value="Genomic_DNA"/>
</dbReference>
<dbReference type="RefSeq" id="WP_012353318.1">
    <property type="nucleotide sequence ID" value="NC_010528.1"/>
</dbReference>
<dbReference type="SMR" id="B3R213"/>
<dbReference type="GeneID" id="29763136"/>
<dbReference type="KEGG" id="cti:RALTA_A2072"/>
<dbReference type="eggNOG" id="COG0332">
    <property type="taxonomic scope" value="Bacteria"/>
</dbReference>
<dbReference type="HOGENOM" id="CLU_039592_4_1_4"/>
<dbReference type="BioCyc" id="CTAI977880:RALTA_RS10055-MONOMER"/>
<dbReference type="UniPathway" id="UPA00094"/>
<dbReference type="Proteomes" id="UP000001692">
    <property type="component" value="Chromosome 1"/>
</dbReference>
<dbReference type="GO" id="GO:0005737">
    <property type="term" value="C:cytoplasm"/>
    <property type="evidence" value="ECO:0007669"/>
    <property type="project" value="UniProtKB-SubCell"/>
</dbReference>
<dbReference type="GO" id="GO:0004315">
    <property type="term" value="F:3-oxoacyl-[acyl-carrier-protein] synthase activity"/>
    <property type="evidence" value="ECO:0007669"/>
    <property type="project" value="InterPro"/>
</dbReference>
<dbReference type="GO" id="GO:0033818">
    <property type="term" value="F:beta-ketoacyl-acyl-carrier-protein synthase III activity"/>
    <property type="evidence" value="ECO:0007669"/>
    <property type="project" value="UniProtKB-UniRule"/>
</dbReference>
<dbReference type="GO" id="GO:0006633">
    <property type="term" value="P:fatty acid biosynthetic process"/>
    <property type="evidence" value="ECO:0007669"/>
    <property type="project" value="UniProtKB-UniRule"/>
</dbReference>
<dbReference type="GO" id="GO:0044550">
    <property type="term" value="P:secondary metabolite biosynthetic process"/>
    <property type="evidence" value="ECO:0007669"/>
    <property type="project" value="TreeGrafter"/>
</dbReference>
<dbReference type="CDD" id="cd00830">
    <property type="entry name" value="KAS_III"/>
    <property type="match status" value="1"/>
</dbReference>
<dbReference type="FunFam" id="3.40.47.10:FF:000004">
    <property type="entry name" value="3-oxoacyl-[acyl-carrier-protein] synthase 3"/>
    <property type="match status" value="1"/>
</dbReference>
<dbReference type="Gene3D" id="3.40.47.10">
    <property type="match status" value="1"/>
</dbReference>
<dbReference type="HAMAP" id="MF_01815">
    <property type="entry name" value="FabH"/>
    <property type="match status" value="1"/>
</dbReference>
<dbReference type="InterPro" id="IPR013747">
    <property type="entry name" value="ACP_syn_III_C"/>
</dbReference>
<dbReference type="InterPro" id="IPR013751">
    <property type="entry name" value="ACP_syn_III_N"/>
</dbReference>
<dbReference type="InterPro" id="IPR004655">
    <property type="entry name" value="FabH"/>
</dbReference>
<dbReference type="InterPro" id="IPR016039">
    <property type="entry name" value="Thiolase-like"/>
</dbReference>
<dbReference type="NCBIfam" id="TIGR00747">
    <property type="entry name" value="fabH"/>
    <property type="match status" value="1"/>
</dbReference>
<dbReference type="NCBIfam" id="NF006829">
    <property type="entry name" value="PRK09352.1"/>
    <property type="match status" value="1"/>
</dbReference>
<dbReference type="PANTHER" id="PTHR34069">
    <property type="entry name" value="3-OXOACYL-[ACYL-CARRIER-PROTEIN] SYNTHASE 3"/>
    <property type="match status" value="1"/>
</dbReference>
<dbReference type="PANTHER" id="PTHR34069:SF2">
    <property type="entry name" value="BETA-KETOACYL-[ACYL-CARRIER-PROTEIN] SYNTHASE III"/>
    <property type="match status" value="1"/>
</dbReference>
<dbReference type="Pfam" id="PF08545">
    <property type="entry name" value="ACP_syn_III"/>
    <property type="match status" value="1"/>
</dbReference>
<dbReference type="Pfam" id="PF08541">
    <property type="entry name" value="ACP_syn_III_C"/>
    <property type="match status" value="1"/>
</dbReference>
<dbReference type="SUPFAM" id="SSF53901">
    <property type="entry name" value="Thiolase-like"/>
    <property type="match status" value="1"/>
</dbReference>
<proteinExistence type="inferred from homology"/>
<feature type="chain" id="PRO_1000187861" description="Beta-ketoacyl-[acyl-carrier-protein] synthase III">
    <location>
        <begin position="1"/>
        <end position="326"/>
    </location>
</feature>
<feature type="region of interest" description="ACP-binding" evidence="1">
    <location>
        <begin position="254"/>
        <end position="258"/>
    </location>
</feature>
<feature type="active site" evidence="1">
    <location>
        <position position="120"/>
    </location>
</feature>
<feature type="active site" evidence="1">
    <location>
        <position position="253"/>
    </location>
</feature>
<feature type="active site" evidence="1">
    <location>
        <position position="283"/>
    </location>
</feature>
<evidence type="ECO:0000255" key="1">
    <source>
        <dbReference type="HAMAP-Rule" id="MF_01815"/>
    </source>
</evidence>
<accession>B3R213</accession>